<protein>
    <recommendedName>
        <fullName evidence="1">2-succinyl-6-hydroxy-2,4-cyclohexadiene-1-carboxylate synthase</fullName>
        <shortName evidence="1">SHCHC synthase</shortName>
        <ecNumber evidence="1">4.2.99.20</ecNumber>
    </recommendedName>
</protein>
<organism>
    <name type="scientific">Escherichia coli O6:K15:H31 (strain 536 / UPEC)</name>
    <dbReference type="NCBI Taxonomy" id="362663"/>
    <lineage>
        <taxon>Bacteria</taxon>
        <taxon>Pseudomonadati</taxon>
        <taxon>Pseudomonadota</taxon>
        <taxon>Gammaproteobacteria</taxon>
        <taxon>Enterobacterales</taxon>
        <taxon>Enterobacteriaceae</taxon>
        <taxon>Escherichia</taxon>
    </lineage>
</organism>
<gene>
    <name evidence="1" type="primary">menH</name>
    <name type="ordered locus">ECP_2307</name>
</gene>
<sequence length="252" mass="27673">MILHAQAKHGKPGLPWLVFLHGFSGDCHEWQEVGEAFADYSRLYVDLPGHGGSATISVDGFDDVTGLLCKTLVSYNILNFWLVGYSLGGRVAMMAACQELAGLCGVVVEGGHPGLQNAEQRAERQRSDRQWAQRFRTEPLTAVFADWYQQPVFASLNDDQRRELVALRSNNNGATLAAMLEATSLAVQPDLRANLSARTFAFYYLCGERDSKFRALAAELAADCHVIPRAGHNAHRENPAGVIASLAQILRF</sequence>
<accession>Q0TFH8</accession>
<feature type="chain" id="PRO_0000341913" description="2-succinyl-6-hydroxy-2,4-cyclohexadiene-1-carboxylate synthase">
    <location>
        <begin position="1"/>
        <end position="252"/>
    </location>
</feature>
<evidence type="ECO:0000255" key="1">
    <source>
        <dbReference type="HAMAP-Rule" id="MF_01660"/>
    </source>
</evidence>
<dbReference type="EC" id="4.2.99.20" evidence="1"/>
<dbReference type="EMBL" id="CP000247">
    <property type="protein sequence ID" value="ABG70301.1"/>
    <property type="molecule type" value="Genomic_DNA"/>
</dbReference>
<dbReference type="RefSeq" id="WP_000600525.1">
    <property type="nucleotide sequence ID" value="NC_008253.1"/>
</dbReference>
<dbReference type="SMR" id="Q0TFH8"/>
<dbReference type="ESTHER" id="ecoli-YFBB">
    <property type="family name" value="MenH_SHCHC"/>
</dbReference>
<dbReference type="MEROPS" id="S33.996"/>
<dbReference type="KEGG" id="ecp:ECP_2307"/>
<dbReference type="HOGENOM" id="CLU_020336_38_2_6"/>
<dbReference type="UniPathway" id="UPA00079"/>
<dbReference type="UniPathway" id="UPA01057">
    <property type="reaction ID" value="UER00900"/>
</dbReference>
<dbReference type="Proteomes" id="UP000009182">
    <property type="component" value="Chromosome"/>
</dbReference>
<dbReference type="GO" id="GO:0070205">
    <property type="term" value="F:2-succinyl-6-hydroxy-2,4-cyclohexadiene-1-carboxylate synthase activity"/>
    <property type="evidence" value="ECO:0007669"/>
    <property type="project" value="UniProtKB-UniRule"/>
</dbReference>
<dbReference type="GO" id="GO:0009234">
    <property type="term" value="P:menaquinone biosynthetic process"/>
    <property type="evidence" value="ECO:0007669"/>
    <property type="project" value="UniProtKB-UniRule"/>
</dbReference>
<dbReference type="FunFam" id="3.40.50.1820:FF:000038">
    <property type="entry name" value="2-succinyl-6-hydroxy-2,4-cyclohexadiene-1-carboxylate synthase"/>
    <property type="match status" value="1"/>
</dbReference>
<dbReference type="Gene3D" id="3.40.50.1820">
    <property type="entry name" value="alpha/beta hydrolase"/>
    <property type="match status" value="1"/>
</dbReference>
<dbReference type="HAMAP" id="MF_01660">
    <property type="entry name" value="MenH"/>
    <property type="match status" value="1"/>
</dbReference>
<dbReference type="InterPro" id="IPR000073">
    <property type="entry name" value="AB_hydrolase_1"/>
</dbReference>
<dbReference type="InterPro" id="IPR029058">
    <property type="entry name" value="AB_hydrolase_fold"/>
</dbReference>
<dbReference type="InterPro" id="IPR022485">
    <property type="entry name" value="SHCHC_synthase_MenH"/>
</dbReference>
<dbReference type="NCBIfam" id="TIGR03695">
    <property type="entry name" value="menH_SHCHC"/>
    <property type="match status" value="1"/>
</dbReference>
<dbReference type="NCBIfam" id="NF008340">
    <property type="entry name" value="PRK11126.1"/>
    <property type="match status" value="1"/>
</dbReference>
<dbReference type="PANTHER" id="PTHR42916">
    <property type="entry name" value="2-SUCCINYL-5-ENOLPYRUVYL-6-HYDROXY-3-CYCLOHEXENE-1-CARBOXYLATE SYNTHASE"/>
    <property type="match status" value="1"/>
</dbReference>
<dbReference type="PANTHER" id="PTHR42916:SF1">
    <property type="entry name" value="PROTEIN PHYLLO, CHLOROPLASTIC"/>
    <property type="match status" value="1"/>
</dbReference>
<dbReference type="Pfam" id="PF12697">
    <property type="entry name" value="Abhydrolase_6"/>
    <property type="match status" value="1"/>
</dbReference>
<dbReference type="SUPFAM" id="SSF53474">
    <property type="entry name" value="alpha/beta-Hydrolases"/>
    <property type="match status" value="1"/>
</dbReference>
<proteinExistence type="inferred from homology"/>
<comment type="function">
    <text evidence="1">Catalyzes a proton abstraction reaction that results in 2,5-elimination of pyruvate from 2-succinyl-5-enolpyruvyl-6-hydroxy-3-cyclohexene-1-carboxylate (SEPHCHC) and the formation of 2-succinyl-6-hydroxy-2,4-cyclohexadiene-1-carboxylate (SHCHC).</text>
</comment>
<comment type="catalytic activity">
    <reaction evidence="1">
        <text>5-enolpyruvoyl-6-hydroxy-2-succinyl-cyclohex-3-ene-1-carboxylate = (1R,6R)-6-hydroxy-2-succinyl-cyclohexa-2,4-diene-1-carboxylate + pyruvate</text>
        <dbReference type="Rhea" id="RHEA:25597"/>
        <dbReference type="ChEBI" id="CHEBI:15361"/>
        <dbReference type="ChEBI" id="CHEBI:58689"/>
        <dbReference type="ChEBI" id="CHEBI:58818"/>
        <dbReference type="EC" id="4.2.99.20"/>
    </reaction>
</comment>
<comment type="pathway">
    <text evidence="1">Quinol/quinone metabolism; 1,4-dihydroxy-2-naphthoate biosynthesis; 1,4-dihydroxy-2-naphthoate from chorismate: step 3/7.</text>
</comment>
<comment type="pathway">
    <text evidence="1">Quinol/quinone metabolism; menaquinone biosynthesis.</text>
</comment>
<comment type="subunit">
    <text evidence="1">Monomer.</text>
</comment>
<comment type="similarity">
    <text evidence="1">Belongs to the AB hydrolase superfamily. MenH family.</text>
</comment>
<name>MENH_ECOL5</name>
<reference key="1">
    <citation type="journal article" date="2006" name="Mol. Microbiol.">
        <title>Role of pathogenicity island-associated integrases in the genome plasticity of uropathogenic Escherichia coli strain 536.</title>
        <authorList>
            <person name="Hochhut B."/>
            <person name="Wilde C."/>
            <person name="Balling G."/>
            <person name="Middendorf B."/>
            <person name="Dobrindt U."/>
            <person name="Brzuszkiewicz E."/>
            <person name="Gottschalk G."/>
            <person name="Carniel E."/>
            <person name="Hacker J."/>
        </authorList>
    </citation>
    <scope>NUCLEOTIDE SEQUENCE [LARGE SCALE GENOMIC DNA]</scope>
    <source>
        <strain>536 / UPEC</strain>
    </source>
</reference>
<keyword id="KW-0456">Lyase</keyword>
<keyword id="KW-0474">Menaquinone biosynthesis</keyword>